<comment type="similarity">
    <text evidence="1">Belongs to the UPF0229 family.</text>
</comment>
<feature type="chain" id="PRO_1000066849" description="UPF0229 protein BT9727_0462">
    <location>
        <begin position="1"/>
        <end position="391"/>
    </location>
</feature>
<feature type="region of interest" description="Disordered" evidence="2">
    <location>
        <begin position="1"/>
        <end position="31"/>
    </location>
</feature>
<feature type="region of interest" description="Disordered" evidence="2">
    <location>
        <begin position="80"/>
        <end position="117"/>
    </location>
</feature>
<feature type="compositionally biased region" description="Polar residues" evidence="2">
    <location>
        <begin position="1"/>
        <end position="16"/>
    </location>
</feature>
<feature type="compositionally biased region" description="Basic and acidic residues" evidence="2">
    <location>
        <begin position="21"/>
        <end position="31"/>
    </location>
</feature>
<feature type="compositionally biased region" description="Gly residues" evidence="2">
    <location>
        <begin position="98"/>
        <end position="115"/>
    </location>
</feature>
<evidence type="ECO:0000255" key="1">
    <source>
        <dbReference type="HAMAP-Rule" id="MF_01232"/>
    </source>
</evidence>
<evidence type="ECO:0000256" key="2">
    <source>
        <dbReference type="SAM" id="MobiDB-lite"/>
    </source>
</evidence>
<name>Y462_BACHK</name>
<accession>Q6HNR1</accession>
<sequence>MGEENQPNYTISQENWSLHRKGYDDQQRHQEKVQEAIKNNLPDLVTEESIVMSNGKDVVKIPIRSLDEYKIRYNYDKNKHVGQGNGDSKVGDVVARDGSGGQKQKGPGKGQGAGDAAGEDYYEAEVSILELEQAFFKELELPNLKRKEMDENRIEHVEFNDIRKTGLWGNIDKKRTMISAYKRNAMRGKASFHPIHQEDLKFRTWNEVLKPDSKAVVLAMMDTSGSMGIWEKYMARSFFFWMTRFLRTKYETVDIEFIAHHTEAKVVPEEEFFSKGESGGTICSSVYKKALELIDNKYSPDRYNIYPFHFSDGDNLTSDNARCVKLVEELMKKCNMFGYGEVNQYNRHSTLMSAYKNIKDENFRYYILKQKADVFHAMKSFFREESGEKMA</sequence>
<organism>
    <name type="scientific">Bacillus thuringiensis subsp. konkukian (strain 97-27)</name>
    <dbReference type="NCBI Taxonomy" id="281309"/>
    <lineage>
        <taxon>Bacteria</taxon>
        <taxon>Bacillati</taxon>
        <taxon>Bacillota</taxon>
        <taxon>Bacilli</taxon>
        <taxon>Bacillales</taxon>
        <taxon>Bacillaceae</taxon>
        <taxon>Bacillus</taxon>
        <taxon>Bacillus cereus group</taxon>
    </lineage>
</organism>
<protein>
    <recommendedName>
        <fullName evidence="1">UPF0229 protein BT9727_0462</fullName>
    </recommendedName>
</protein>
<gene>
    <name type="ordered locus">BT9727_0462</name>
</gene>
<proteinExistence type="inferred from homology"/>
<dbReference type="EMBL" id="AE017355">
    <property type="protein sequence ID" value="AAT62066.1"/>
    <property type="molecule type" value="Genomic_DNA"/>
</dbReference>
<dbReference type="RefSeq" id="YP_034810.1">
    <property type="nucleotide sequence ID" value="NC_005957.1"/>
</dbReference>
<dbReference type="SMR" id="Q6HNR1"/>
<dbReference type="KEGG" id="btk:BT9727_0462"/>
<dbReference type="PATRIC" id="fig|281309.8.peg.492"/>
<dbReference type="HOGENOM" id="CLU_049702_2_0_9"/>
<dbReference type="Proteomes" id="UP000001301">
    <property type="component" value="Chromosome"/>
</dbReference>
<dbReference type="HAMAP" id="MF_01232">
    <property type="entry name" value="UPF0229"/>
    <property type="match status" value="1"/>
</dbReference>
<dbReference type="InterPro" id="IPR014230">
    <property type="entry name" value="Spore_YhbH"/>
</dbReference>
<dbReference type="InterPro" id="IPR006698">
    <property type="entry name" value="UPF0229"/>
</dbReference>
<dbReference type="NCBIfam" id="TIGR02877">
    <property type="entry name" value="spore_yhbH"/>
    <property type="match status" value="1"/>
</dbReference>
<dbReference type="PANTHER" id="PTHR30510">
    <property type="entry name" value="UPF0229 PROTEIN YEAH"/>
    <property type="match status" value="1"/>
</dbReference>
<dbReference type="PANTHER" id="PTHR30510:SF2">
    <property type="entry name" value="UPF0229 PROTEIN YEAH"/>
    <property type="match status" value="1"/>
</dbReference>
<dbReference type="Pfam" id="PF04285">
    <property type="entry name" value="DUF444"/>
    <property type="match status" value="2"/>
</dbReference>
<reference key="1">
    <citation type="journal article" date="2006" name="J. Bacteriol.">
        <title>Pathogenomic sequence analysis of Bacillus cereus and Bacillus thuringiensis isolates closely related to Bacillus anthracis.</title>
        <authorList>
            <person name="Han C.S."/>
            <person name="Xie G."/>
            <person name="Challacombe J.F."/>
            <person name="Altherr M.R."/>
            <person name="Bhotika S.S."/>
            <person name="Bruce D."/>
            <person name="Campbell C.S."/>
            <person name="Campbell M.L."/>
            <person name="Chen J."/>
            <person name="Chertkov O."/>
            <person name="Cleland C."/>
            <person name="Dimitrijevic M."/>
            <person name="Doggett N.A."/>
            <person name="Fawcett J.J."/>
            <person name="Glavina T."/>
            <person name="Goodwin L.A."/>
            <person name="Hill K.K."/>
            <person name="Hitchcock P."/>
            <person name="Jackson P.J."/>
            <person name="Keim P."/>
            <person name="Kewalramani A.R."/>
            <person name="Longmire J."/>
            <person name="Lucas S."/>
            <person name="Malfatti S."/>
            <person name="McMurry K."/>
            <person name="Meincke L.J."/>
            <person name="Misra M."/>
            <person name="Moseman B.L."/>
            <person name="Mundt M."/>
            <person name="Munk A.C."/>
            <person name="Okinaka R.T."/>
            <person name="Parson-Quintana B."/>
            <person name="Reilly L.P."/>
            <person name="Richardson P."/>
            <person name="Robinson D.L."/>
            <person name="Rubin E."/>
            <person name="Saunders E."/>
            <person name="Tapia R."/>
            <person name="Tesmer J.G."/>
            <person name="Thayer N."/>
            <person name="Thompson L.S."/>
            <person name="Tice H."/>
            <person name="Ticknor L.O."/>
            <person name="Wills P.L."/>
            <person name="Brettin T.S."/>
            <person name="Gilna P."/>
        </authorList>
    </citation>
    <scope>NUCLEOTIDE SEQUENCE [LARGE SCALE GENOMIC DNA]</scope>
    <source>
        <strain>97-27</strain>
    </source>
</reference>